<reference key="1">
    <citation type="journal article" date="1998" name="Science">
        <title>Genome sequence of the nematode C. elegans: a platform for investigating biology.</title>
        <authorList>
            <consortium name="The C. elegans sequencing consortium"/>
        </authorList>
    </citation>
    <scope>NUCLEOTIDE SEQUENCE [LARGE SCALE GENOMIC DNA]</scope>
    <source>
        <strain>Bristol N2</strain>
    </source>
</reference>
<reference key="2">
    <citation type="journal article" date="2002" name="Genes Dev.">
        <title>C. elegans condensin promotes mitotic chromosome architecture, centromere organization, and sister chromatid segregation during mitosis and meiosis.</title>
        <authorList>
            <person name="Hagstrom K.A."/>
            <person name="Holmes V.F."/>
            <person name="Cozzarelli N.R."/>
            <person name="Meyer B.J."/>
        </authorList>
    </citation>
    <scope>FUNCTION</scope>
    <scope>INTERACTION WITH MIX-1</scope>
    <scope>SUBCELLULAR LOCATION</scope>
    <scope>DISRUPTION PHENOTYPE</scope>
</reference>
<reference key="3">
    <citation type="journal article" date="2009" name="Cell">
        <title>Condensins regulate meiotic DNA break distribution, thus crossover frequency, by controlling chromosome structure.</title>
        <authorList>
            <person name="Mets D.G."/>
            <person name="Meyer B.J."/>
        </authorList>
    </citation>
    <scope>FUNCTION</scope>
    <scope>IDENTIFICATION IN A CONDENSIN I COMPLEX AND IN A CONDENSIN II COMPLEX</scope>
    <scope>INTERACTION WITH CAPG-1; DPY-26; MIX-1; DPY-28 AND HCP-6</scope>
</reference>
<reference key="4">
    <citation type="journal article" date="2009" name="Curr. Biol.">
        <title>Three distinct condensin complexes control C. elegans chromosome dynamics.</title>
        <authorList>
            <person name="Csankovszki G."/>
            <person name="Collette K."/>
            <person name="Spahl K."/>
            <person name="Carey J."/>
            <person name="Snyder M."/>
            <person name="Petty E."/>
            <person name="Patel U."/>
            <person name="Tabuchi T."/>
            <person name="Liu H."/>
            <person name="McLeod I."/>
            <person name="Thompson J."/>
            <person name="Sarkeshik A."/>
            <person name="Sarkesik A."/>
            <person name="Yates J."/>
            <person name="Meyer B.J."/>
            <person name="Hagstrom K."/>
        </authorList>
    </citation>
    <scope>FUNCTION</scope>
    <scope>IDENTIFICATION IN A CONDENSIN I COMPLEX AND IN A CONDENSIN II COMPLEX</scope>
    <scope>INTERACTION WITH MIX-1; DPY-28; CAPG-1; DPY-26; HCP-6; CAPG-2 AND KLE-2</scope>
</reference>
<reference key="5">
    <citation type="journal article" date="2013" name="Curr. Biol.">
        <title>Condensin and the spindle midzone prevent cytokinesis failure induced by chromatin bridges in C. elegans embryos.</title>
        <authorList>
            <person name="Bembenek J.N."/>
            <person name="Verbrugghe K.J."/>
            <person name="Khanikar J."/>
            <person name="Csankovszki G."/>
            <person name="Chan R.C."/>
        </authorList>
    </citation>
    <scope>FUNCTION</scope>
    <scope>DISRUPTION PHENOTYPE</scope>
</reference>
<reference key="6">
    <citation type="journal article" date="2017" name="PLoS Genet.">
        <title>An SMC-like protein binds and regulates Caenorhabditis elegans condensins.</title>
        <authorList>
            <person name="Chao L.F."/>
            <person name="Singh M."/>
            <person name="Thompson J."/>
            <person name="Yates J.R. III"/>
            <person name="Hagstrom K.A."/>
        </authorList>
    </citation>
    <scope>INTERACTION WITH SMCL-1; DPY-26 AND KLE-2</scope>
    <scope>IDENTIFICATION BY MASS SPECTROMETRY</scope>
</reference>
<comment type="function">
    <text evidence="2 6 7 8 9">Central component of the condensin I complex, a complex required for conversion of interphase chromatin into mitotic-like condense chromosomes (PubMed:11914278, PubMed:19781752). The condensin I complex introduces positive supercoils into relaxed DNA in the presence of type I topoisomerases (PubMed:11914278). Converts nicked DNA into positive knotted forms in the presence of type II topoisomerases (By similarity). Also a central component of the condensin II complex, a complex that seems to play a role in prophase chromosome condensation (PubMed:19119011, PubMed:19781752). Both the condensin complex I and II play a role in meiotic and mitotic chromosome segregation (PubMed:11914278, PubMed:19119011, PubMed:23684975). Plays a role in robust cytokinesis upon the presence of chromatin obstructions (PubMed:23684975).</text>
</comment>
<comment type="subunit">
    <text evidence="6 7 8 10">Component of the condensin I complex, which contains the mix-1/SMC2 and smc-4/SMC4 heterodimer, and three non SMC subunits that probably regulate the complex: dpy-26, capg-1 and dpy-28 (PubMed:11914278, PubMed:19119011, PubMed:19781752). Within the complex, interacts with mix-1, dpy-26, capg-1 and dpy-28 (PubMed:11914278, PubMed:19119011, PubMed:19781752, PubMed:28301465). Component of the condensin II complex, which contains the mix-1/SMC2 and smc-4/SMC4 heterodimer, and three non SMC subunits, kle-2, capg-2 and hcp-6 that probably regulate the complex (PubMed:19119011, PubMed:19781752). Within the complex, interacts with mix-1, kle-2, capg-2 and hcp-6 (PubMed:19119011, PubMed:19781752, PubMed:28301465). Interacts with smcl-1 (PubMed:28301465).</text>
</comment>
<comment type="interaction">
    <interactant intactId="EBI-1152127">
        <id>Q20060</id>
    </interactant>
    <interactant intactId="EBI-1152136">
        <id>Q09591</id>
        <label>mix-1</label>
    </interactant>
    <organismsDiffer>false</organismsDiffer>
    <experiments>6</experiments>
</comment>
<comment type="subcellular location">
    <subcellularLocation>
        <location evidence="6">Nucleus</location>
    </subcellularLocation>
    <subcellularLocation>
        <location evidence="6">Chromosome</location>
    </subcellularLocation>
    <text evidence="6">Localizes to condensed chromosomes during mitosis and meiosis. Localizes to chromosomes in a faint speckled pattern during prophase, then appears in two stripes outlining each chromosome during prometaphase. During metaphase, localizes at the poleward face of the condensed chromosomes. Dissociation from chromosomes is observed in late telophase.</text>
</comment>
<comment type="domain">
    <text evidence="1">The flexible SMC hinge domain, which separates the large intramolecular coiled coil regions, allows the heterodimerization with mix-1, forming a V-shaped heterodimer.</text>
</comment>
<comment type="disruption phenotype">
    <text evidence="6 9">RNAi-mediated knockdown disrupts prometaphase chromosome organization and chromosome segregation in mitosis and meiosis II and leads to aneuploidy throughout development (PubMed:11914278, PubMed:23684975). Disrupts mix-1 localization to mitotic chromosomes (PubMed:11914278). Increased levels of phosphorylated air-2 at the spindle midzone, indicating activation of the abscission checkpoint (PubMed:23684975). Results in cleavage furrow regression and failed cytokinesis during the first and second embryonic divisions (PubMed:23684975).</text>
</comment>
<comment type="similarity">
    <text evidence="11">Belongs to the SMC family. SMC4 subfamily.</text>
</comment>
<name>SMC4_CAEEL</name>
<dbReference type="EMBL" id="Z46242">
    <property type="protein sequence ID" value="CAA86336.1"/>
    <property type="molecule type" value="Genomic_DNA"/>
</dbReference>
<dbReference type="PIR" id="T21809">
    <property type="entry name" value="T21809"/>
</dbReference>
<dbReference type="RefSeq" id="NP_497935.1">
    <property type="nucleotide sequence ID" value="NM_065534.8"/>
</dbReference>
<dbReference type="SMR" id="Q20060"/>
<dbReference type="BioGRID" id="40839">
    <property type="interactions" value="12"/>
</dbReference>
<dbReference type="ComplexPortal" id="CPX-1271">
    <property type="entry name" value="Condensin I complex"/>
</dbReference>
<dbReference type="ComplexPortal" id="CPX-1272">
    <property type="entry name" value="Condensin II complex"/>
</dbReference>
<dbReference type="FunCoup" id="Q20060">
    <property type="interactions" value="1685"/>
</dbReference>
<dbReference type="IntAct" id="Q20060">
    <property type="interactions" value="7"/>
</dbReference>
<dbReference type="STRING" id="6239.F35G12.8.2"/>
<dbReference type="iPTMnet" id="Q20060"/>
<dbReference type="PaxDb" id="6239-F35G12.8"/>
<dbReference type="PeptideAtlas" id="Q20060"/>
<dbReference type="EnsemblMetazoa" id="F35G12.8.1">
    <property type="protein sequence ID" value="F35G12.8.1"/>
    <property type="gene ID" value="WBGene00004874"/>
</dbReference>
<dbReference type="GeneID" id="175603"/>
<dbReference type="KEGG" id="cel:CELE_F35G12.8"/>
<dbReference type="UCSC" id="F35G12.8">
    <property type="organism name" value="c. elegans"/>
</dbReference>
<dbReference type="AGR" id="WB:WBGene00004874"/>
<dbReference type="CTD" id="175603"/>
<dbReference type="WormBase" id="F35G12.8">
    <property type="protein sequence ID" value="CE03287"/>
    <property type="gene ID" value="WBGene00004874"/>
    <property type="gene designation" value="smc-4"/>
</dbReference>
<dbReference type="eggNOG" id="KOG0996">
    <property type="taxonomic scope" value="Eukaryota"/>
</dbReference>
<dbReference type="GeneTree" id="ENSGT00900000141094"/>
<dbReference type="HOGENOM" id="CLU_001042_4_1_1"/>
<dbReference type="InParanoid" id="Q20060"/>
<dbReference type="OMA" id="CPALDNM"/>
<dbReference type="OrthoDB" id="5575062at2759"/>
<dbReference type="PhylomeDB" id="Q20060"/>
<dbReference type="PRO" id="PR:Q20060"/>
<dbReference type="Proteomes" id="UP000001940">
    <property type="component" value="Chromosome III"/>
</dbReference>
<dbReference type="Bgee" id="WBGene00004874">
    <property type="expression patterns" value="Expressed in germ line (C elegans) and 4 other cell types or tissues"/>
</dbReference>
<dbReference type="GO" id="GO:0000775">
    <property type="term" value="C:chromosome, centromeric region"/>
    <property type="evidence" value="ECO:0000314"/>
    <property type="project" value="WormBase"/>
</dbReference>
<dbReference type="GO" id="GO:0000793">
    <property type="term" value="C:condensed chromosome"/>
    <property type="evidence" value="ECO:0000314"/>
    <property type="project" value="WormBase"/>
</dbReference>
<dbReference type="GO" id="GO:0000796">
    <property type="term" value="C:condensin complex"/>
    <property type="evidence" value="ECO:0000353"/>
    <property type="project" value="ComplexPortal"/>
</dbReference>
<dbReference type="GO" id="GO:0005634">
    <property type="term" value="C:nucleus"/>
    <property type="evidence" value="ECO:0007669"/>
    <property type="project" value="UniProtKB-SubCell"/>
</dbReference>
<dbReference type="GO" id="GO:0005524">
    <property type="term" value="F:ATP binding"/>
    <property type="evidence" value="ECO:0007669"/>
    <property type="project" value="UniProtKB-KW"/>
</dbReference>
<dbReference type="GO" id="GO:0016887">
    <property type="term" value="F:ATP hydrolysis activity"/>
    <property type="evidence" value="ECO:0007669"/>
    <property type="project" value="InterPro"/>
</dbReference>
<dbReference type="GO" id="GO:0051301">
    <property type="term" value="P:cell division"/>
    <property type="evidence" value="ECO:0007669"/>
    <property type="project" value="UniProtKB-KW"/>
</dbReference>
<dbReference type="GO" id="GO:0045132">
    <property type="term" value="P:meiotic chromosome segregation"/>
    <property type="evidence" value="ECO:0000303"/>
    <property type="project" value="ComplexPortal"/>
</dbReference>
<dbReference type="GO" id="GO:0007076">
    <property type="term" value="P:mitotic chromosome condensation"/>
    <property type="evidence" value="ECO:0000318"/>
    <property type="project" value="GO_Central"/>
</dbReference>
<dbReference type="GO" id="GO:0000070">
    <property type="term" value="P:mitotic sister chromatid segregation"/>
    <property type="evidence" value="ECO:0000315"/>
    <property type="project" value="WormBase"/>
</dbReference>
<dbReference type="GO" id="GO:0110039">
    <property type="term" value="P:positive regulation of nematode male tail tip morphogenesis"/>
    <property type="evidence" value="ECO:0000315"/>
    <property type="project" value="UniProtKB"/>
</dbReference>
<dbReference type="FunFam" id="3.40.50.300:FF:000481">
    <property type="entry name" value="Structural maintenance of chromosomes 4"/>
    <property type="match status" value="1"/>
</dbReference>
<dbReference type="FunFam" id="3.40.50.300:FF:000585">
    <property type="entry name" value="Structural maintenance of chromosomes 4"/>
    <property type="match status" value="1"/>
</dbReference>
<dbReference type="Gene3D" id="1.20.1060.20">
    <property type="match status" value="1"/>
</dbReference>
<dbReference type="Gene3D" id="3.30.70.1620">
    <property type="match status" value="1"/>
</dbReference>
<dbReference type="Gene3D" id="3.40.50.300">
    <property type="entry name" value="P-loop containing nucleotide triphosphate hydrolases"/>
    <property type="match status" value="2"/>
</dbReference>
<dbReference type="InterPro" id="IPR027417">
    <property type="entry name" value="P-loop_NTPase"/>
</dbReference>
<dbReference type="InterPro" id="IPR003395">
    <property type="entry name" value="RecF/RecN/SMC_N"/>
</dbReference>
<dbReference type="InterPro" id="IPR024704">
    <property type="entry name" value="SMC"/>
</dbReference>
<dbReference type="InterPro" id="IPR010935">
    <property type="entry name" value="SMC_hinge"/>
</dbReference>
<dbReference type="InterPro" id="IPR036277">
    <property type="entry name" value="SMC_hinge_sf"/>
</dbReference>
<dbReference type="PANTHER" id="PTHR18937:SF173">
    <property type="entry name" value="STRUCTURAL MAINTENANCE OF CHROMOSOMES PROTEIN 4"/>
    <property type="match status" value="1"/>
</dbReference>
<dbReference type="PANTHER" id="PTHR18937">
    <property type="entry name" value="STRUCTURAL MAINTENANCE OF CHROMOSOMES SMC FAMILY MEMBER"/>
    <property type="match status" value="1"/>
</dbReference>
<dbReference type="Pfam" id="PF06470">
    <property type="entry name" value="SMC_hinge"/>
    <property type="match status" value="1"/>
</dbReference>
<dbReference type="Pfam" id="PF02463">
    <property type="entry name" value="SMC_N"/>
    <property type="match status" value="1"/>
</dbReference>
<dbReference type="PIRSF" id="PIRSF005719">
    <property type="entry name" value="SMC"/>
    <property type="match status" value="1"/>
</dbReference>
<dbReference type="SMART" id="SM00968">
    <property type="entry name" value="SMC_hinge"/>
    <property type="match status" value="1"/>
</dbReference>
<dbReference type="SUPFAM" id="SSF52540">
    <property type="entry name" value="P-loop containing nucleoside triphosphate hydrolases"/>
    <property type="match status" value="1"/>
</dbReference>
<dbReference type="SUPFAM" id="SSF75553">
    <property type="entry name" value="Smc hinge domain"/>
    <property type="match status" value="1"/>
</dbReference>
<dbReference type="SUPFAM" id="SSF57997">
    <property type="entry name" value="Tropomyosin"/>
    <property type="match status" value="1"/>
</dbReference>
<protein>
    <recommendedName>
        <fullName>Structural maintenance of chromosomes protein 4</fullName>
        <shortName>SMC protein 4</shortName>
        <shortName>SMC-4</shortName>
    </recommendedName>
</protein>
<sequence>MPPKTSAAPPQSDESDSDFDDAPVKKPQKKTTKPVNRHKEGSKDPEEELQRAVNEKFDGSDGEDDDSDLFSLQLPSRPDFLTKPNRADRLMIRNVEVDNFKSYFGKASIGPFHKSFTSIIGPNGSGKSNLIDSLLFVFGFRASKIRSAKVSNLIHKSAGRNPDKCTVTIHFQRIVDIPGHYEVVKDSEFTISRTAFQNNSSSYAIDGRPATKNEVEARLRRVDIDIEHNRFLILQGEVEQIAMMKPVKTTKSETGMVEYLEDIIGTNRLEPFVKLFQRRVNRLTCDLSQQRIARDHARNSKVAMENPVRAAIEFLMKENEATTIHMKLEQRRRQRYLDKIAPKQAELDKMKEEMKSIAETLDTNKNEYKQSEEAQKVMIEERSKLDKNFDSLSKELSDLGTEETRRKEALKRHQANISKAEAEKEKEVKKRSNLEAAPEKAERKIAKCQEEVEQLLEIEKTANEEADKNLDEFEKRSEAPKEEQKKIQETWAQKSNEFNKVRGEARIAREDFEDLKKLANSGTDKLIELKKRLESSEESYAKEKDELDKLKPEFDSWNDKLKQLSTELPTLRNTARQKNQDLAKTRDRLETLRQQNSSCSSSNKVIQALMKEKEAGRIKSFHGRLGDLGVIDPKYEGAICTNFGARLNYLIVGKEEDAKNVINFLVANKLPRQTVQPLDKIKCDKRDLAPNPTNPLPAPRLIDLIDCDPVLKPAFYDMVRSAIVGDSTQEAQRMHRMPACRGVTVCTLEGSMIHPSGSFTGGGKTVKGLILTDKNKMAKQVTPEDKAAERDLAEKLGKLRDEADELKGQEHEMDGQLIEARRKVAEMSNRLSIVTSSVQSAAPAIETLKKTIANQEKEAAKVKVDAKTLEDKQKIVEELEKKRDELGEEAAKVKARQAEIQSKLDGIFKELVQCHRDEAKESLQKRQKLEKDIAKETANISNSGRNIAKCDENISRHDKDIEKMKKKCEELMEKAIDDEEVKSKKETVERFEKQIKKLQTKGEEMTKKQSELSAAETKLEGELKKCSEGIKELKESMLADRLKVEDIEKKLAALKVNRIPRFQFLIESSRPEDLEMQIDDKMPVVDENQSPEEVERQKKHMACVMSDAAYALEFEMRQKVLENTESYENVDGEDRVPVELLSDEKINEISSRDAEEMQMKLKVCEQQVEALKAKVDISSIKAYVDKVKQYNEQVIKLTIATEVHRKHNQELQRIKQMRLEEFHSAFEFIGKHLVAVFKMLTDGGDAKLEYIDKDDPFRQGISFMVRPAKKAWKQIQFLSGGEKTLSSLALIFALHMFRPTPFYVMDEIDAALDYRNVSIIAQYVRQKTENAQFIIISLRNNMFELANRLVGIYKVDGCTRNVAIDPLRVCEMAKQITDSLGQATCTLPDEVTQRFNETMSRQNKEMIAQEKQYPNFPSSNEISKAEKIVNVEGRVRKELIQTTRDVTSRPQSKATTSGDGTERPASRSASRPESRINQMKYPAPRLVERSSSQNVRSPRKARNIEADETTPPSKRSNSASTPKRSPMKPLTPSSKKKEKAIVDDDDDME</sequence>
<gene>
    <name type="primary">smc-4</name>
    <name type="ORF">F35G12.8</name>
</gene>
<proteinExistence type="evidence at protein level"/>
<accession>Q20060</accession>
<organism>
    <name type="scientific">Caenorhabditis elegans</name>
    <dbReference type="NCBI Taxonomy" id="6239"/>
    <lineage>
        <taxon>Eukaryota</taxon>
        <taxon>Metazoa</taxon>
        <taxon>Ecdysozoa</taxon>
        <taxon>Nematoda</taxon>
        <taxon>Chromadorea</taxon>
        <taxon>Rhabditida</taxon>
        <taxon>Rhabditina</taxon>
        <taxon>Rhabditomorpha</taxon>
        <taxon>Rhabditoidea</taxon>
        <taxon>Rhabditidae</taxon>
        <taxon>Peloderinae</taxon>
        <taxon>Caenorhabditis</taxon>
    </lineage>
</organism>
<evidence type="ECO:0000250" key="1"/>
<evidence type="ECO:0000250" key="2">
    <source>
        <dbReference type="UniProtKB" id="P50532"/>
    </source>
</evidence>
<evidence type="ECO:0000255" key="3"/>
<evidence type="ECO:0000255" key="4">
    <source>
        <dbReference type="PROSITE-ProRule" id="PRU00499"/>
    </source>
</evidence>
<evidence type="ECO:0000256" key="5">
    <source>
        <dbReference type="SAM" id="MobiDB-lite"/>
    </source>
</evidence>
<evidence type="ECO:0000269" key="6">
    <source>
    </source>
</evidence>
<evidence type="ECO:0000269" key="7">
    <source>
    </source>
</evidence>
<evidence type="ECO:0000269" key="8">
    <source>
    </source>
</evidence>
<evidence type="ECO:0000269" key="9">
    <source>
    </source>
</evidence>
<evidence type="ECO:0000269" key="10">
    <source>
    </source>
</evidence>
<evidence type="ECO:0000305" key="11"/>
<keyword id="KW-0067">ATP-binding</keyword>
<keyword id="KW-0131">Cell cycle</keyword>
<keyword id="KW-0132">Cell division</keyword>
<keyword id="KW-0158">Chromosome</keyword>
<keyword id="KW-0175">Coiled coil</keyword>
<keyword id="KW-0226">DNA condensation</keyword>
<keyword id="KW-0469">Meiosis</keyword>
<keyword id="KW-0498">Mitosis</keyword>
<keyword id="KW-0547">Nucleotide-binding</keyword>
<keyword id="KW-0539">Nucleus</keyword>
<keyword id="KW-1185">Reference proteome</keyword>
<feature type="chain" id="PRO_0000119024" description="Structural maintenance of chromosomes protein 4">
    <location>
        <begin position="1"/>
        <end position="1549"/>
    </location>
</feature>
<feature type="domain" description="SMC hinge">
    <location>
        <begin position="619"/>
        <end position="734"/>
    </location>
</feature>
<feature type="region of interest" description="Disordered" evidence="5">
    <location>
        <begin position="1"/>
        <end position="78"/>
    </location>
</feature>
<feature type="region of interest" description="Disordered" evidence="5">
    <location>
        <begin position="396"/>
        <end position="444"/>
    </location>
</feature>
<feature type="region of interest" description="Disordered" evidence="5">
    <location>
        <begin position="460"/>
        <end position="485"/>
    </location>
</feature>
<feature type="region of interest" description="Disordered" evidence="5">
    <location>
        <begin position="1440"/>
        <end position="1549"/>
    </location>
</feature>
<feature type="coiled-coil region" evidence="3">
    <location>
        <begin position="326"/>
        <end position="604"/>
    </location>
</feature>
<feature type="coiled-coil region" evidence="3">
    <location>
        <begin position="786"/>
        <end position="1058"/>
    </location>
</feature>
<feature type="coiled-coil region" evidence="3">
    <location>
        <begin position="1144"/>
        <end position="1182"/>
    </location>
</feature>
<feature type="compositionally biased region" description="Basic residues" evidence="5">
    <location>
        <begin position="26"/>
        <end position="36"/>
    </location>
</feature>
<feature type="compositionally biased region" description="Basic and acidic residues" evidence="5">
    <location>
        <begin position="37"/>
        <end position="59"/>
    </location>
</feature>
<feature type="compositionally biased region" description="Basic and acidic residues" evidence="5">
    <location>
        <begin position="396"/>
        <end position="407"/>
    </location>
</feature>
<feature type="compositionally biased region" description="Basic and acidic residues" evidence="5">
    <location>
        <begin position="420"/>
        <end position="444"/>
    </location>
</feature>
<feature type="compositionally biased region" description="Polar residues" evidence="5">
    <location>
        <begin position="1440"/>
        <end position="1459"/>
    </location>
</feature>
<feature type="compositionally biased region" description="Basic and acidic residues" evidence="5">
    <location>
        <begin position="1460"/>
        <end position="1474"/>
    </location>
</feature>
<feature type="compositionally biased region" description="Polar residues" evidence="5">
    <location>
        <begin position="1510"/>
        <end position="1523"/>
    </location>
</feature>
<feature type="binding site" evidence="4">
    <location>
        <begin position="121"/>
        <end position="128"/>
    </location>
    <ligand>
        <name>ATP</name>
        <dbReference type="ChEBI" id="CHEBI:30616"/>
    </ligand>
</feature>